<feature type="chain" id="PRO_0000099640" description="Protein OPG074">
    <location>
        <begin position="1"/>
        <end position="666"/>
    </location>
</feature>
<feature type="transmembrane region" description="Helical" evidence="2">
    <location>
        <begin position="574"/>
        <end position="596"/>
    </location>
</feature>
<sequence length="666" mass="77305">MFMYPEFARKALSKLISKKLNIEKVSSKHQLVLLDYGLHGLLPKSLYLEAINSDILNVRFFPPEIINVTDIVKALQNSCRVDEYLKAVSLYHKNSLMVSGPNVVKLMIEYNLLTHSDLEWLINENVIKATYLLKINAYMINFKIDLTVDEIIDLVKDIPVGATLHLYNILNNLDLNIILRISDEYNIPPVHDILSKLTDEEMCIKLVTKYPMENVINFINQDVRYSPTFIKTIKDFVNAHLPTMYDGLNDYLHSVIVDKDLIEEYKIKSVAMFNLEYKTDVDTLTLDEQIFVEVNISYYDFRYRQFANEFRDYIMLKESRQITMQTGDKIRRFRRPMSLRSTIIKKDTDSLEDILSHIDNARKNSKVSIEDVDRIISSFRLNPCVVRRTMLSNIDIKTKIMVLKIAKDWKSCALTLSAIKGIMVTDTINTVLSKILHHHRNVFKYLTSVDNKEITVCNCSRCVSLFYRELKSIRCDLNTDDGLLARLYDLTRYALHGRINQNLIGQRCWGPLTEMLFNEDKKRKLNNLMVYIKISDMLVYGHSIEKTLIPITESLSFKLSVDTMSVSNDQYAKVVIFFNTIIEYIVATIYYRLAVLNNYVAIRHFVLKVLHTVMEACGVLFSHIKVNDKIEHELEEMVDKGIVPSYLHHLSINVISIILDDINGTR</sequence>
<accession>P34010</accession>
<organismHost>
    <name type="scientific">Homo sapiens</name>
    <name type="common">Human</name>
    <dbReference type="NCBI Taxonomy" id="9606"/>
</organismHost>
<reference key="1">
    <citation type="journal article" date="1993" name="Virus Res.">
        <title>Analysis of the nucleotide sequence of a 43 kbp segment of the genome of variola virus India-1967 strain.</title>
        <authorList>
            <person name="Shchelkunov S.N."/>
            <person name="Blinov V.M."/>
            <person name="Resenchuk S.M."/>
            <person name="Totmenin A.V."/>
            <person name="Sandakhchiev L.S."/>
        </authorList>
    </citation>
    <scope>NUCLEOTIDE SEQUENCE [GENOMIC DNA]</scope>
</reference>
<reference key="2">
    <citation type="journal article" date="1993" name="FEBS Lett.">
        <title>Genes of variola and vaccinia viruses necessary to overcome the host protective mechanisms.</title>
        <authorList>
            <person name="Shchelkunov S.N."/>
            <person name="Blinov V.M."/>
            <person name="Sandakhchiev L.S."/>
        </authorList>
    </citation>
    <scope>NUCLEOTIDE SEQUENCE [LARGE SCALE GENOMIC DNA]</scope>
</reference>
<dbReference type="EMBL" id="X69198">
    <property type="protein sequence ID" value="CAA48994.1"/>
    <property type="molecule type" value="Genomic_DNA"/>
</dbReference>
<dbReference type="PIR" id="F36842">
    <property type="entry name" value="F36842"/>
</dbReference>
<dbReference type="KEGG" id="vg:1486483"/>
<dbReference type="Proteomes" id="UP000002060">
    <property type="component" value="Segment"/>
</dbReference>
<dbReference type="GO" id="GO:0016020">
    <property type="term" value="C:membrane"/>
    <property type="evidence" value="ECO:0007669"/>
    <property type="project" value="UniProtKB-SubCell"/>
</dbReference>
<dbReference type="InterPro" id="IPR021155">
    <property type="entry name" value="Poxvirus_E2/O1"/>
</dbReference>
<dbReference type="InterPro" id="IPR006732">
    <property type="entry name" value="Poxvirus_O1"/>
</dbReference>
<dbReference type="Pfam" id="PF04497">
    <property type="entry name" value="Pox_E2-like"/>
    <property type="match status" value="2"/>
</dbReference>
<dbReference type="PIRSF" id="PIRSF015980">
    <property type="entry name" value="VAC_O1L"/>
    <property type="match status" value="1"/>
</dbReference>
<name>PG074_VAR67</name>
<evidence type="ECO:0000250" key="1">
    <source>
        <dbReference type="UniProtKB" id="Q80HX1"/>
    </source>
</evidence>
<evidence type="ECO:0000255" key="2"/>
<evidence type="ECO:0000305" key="3"/>
<protein>
    <recommendedName>
        <fullName>Protein OPG074</fullName>
    </recommendedName>
    <alternativeName>
        <fullName>Protein O1</fullName>
    </alternativeName>
</protein>
<keyword id="KW-0244">Early protein</keyword>
<keyword id="KW-0472">Membrane</keyword>
<keyword id="KW-1185">Reference proteome</keyword>
<keyword id="KW-0812">Transmembrane</keyword>
<keyword id="KW-1133">Transmembrane helix</keyword>
<organism>
    <name type="scientific">Variola virus (isolate Human/India/Ind3/1967)</name>
    <name type="common">VARV</name>
    <name type="synonym">Smallpox virus</name>
    <dbReference type="NCBI Taxonomy" id="587200"/>
    <lineage>
        <taxon>Viruses</taxon>
        <taxon>Varidnaviria</taxon>
        <taxon>Bamfordvirae</taxon>
        <taxon>Nucleocytoviricota</taxon>
        <taxon>Pokkesviricetes</taxon>
        <taxon>Chitovirales</taxon>
        <taxon>Poxviridae</taxon>
        <taxon>Chordopoxvirinae</taxon>
        <taxon>Orthopoxvirus</taxon>
        <taxon>Variola virus</taxon>
    </lineage>
</organism>
<proteinExistence type="inferred from homology"/>
<comment type="subcellular location">
    <subcellularLocation>
        <location evidence="3">Membrane</location>
        <topology evidence="3">Single-pass membrane protein</topology>
    </subcellularLocation>
</comment>
<comment type="induction">
    <text evidence="1">Expressed in the early phase of the viral replicative cycle.</text>
</comment>
<comment type="similarity">
    <text evidence="3">Belongs to the orthopoxvirus OPG074 family.</text>
</comment>
<gene>
    <name type="primary">OPG074</name>
    <name type="ORF">O1L</name>
</gene>